<comment type="function">
    <text evidence="1 5">Nucleolar RNA helicase that plays a role in various biological processes including innate immunity, ribosome biogenesis or nucleolus organization. Plays an essential role in maintaining nucleolar integrity in planarian stem cells (PubMed:32703285). Maintains embryonic stem cells proliferation by conventional regulation of ribosome assembly and interaction with OCT4 and POU5F1 complex (PubMed:32703285). Regulates antiviral innate immunity by inhibiting the virus-triggered signaling nuclear translocation of IRF3. Mechanistically, acts by disrupting the interaction between IRF3 and importin IPO5. May play a role in later stages of the processing of the pre-ribosomal particles leading to mature 60S ribosomal subunits. Has intrinsic ATPase activity (By similarity).</text>
</comment>
<comment type="catalytic activity">
    <reaction>
        <text>ATP + H2O = ADP + phosphate + H(+)</text>
        <dbReference type="Rhea" id="RHEA:13065"/>
        <dbReference type="ChEBI" id="CHEBI:15377"/>
        <dbReference type="ChEBI" id="CHEBI:15378"/>
        <dbReference type="ChEBI" id="CHEBI:30616"/>
        <dbReference type="ChEBI" id="CHEBI:43474"/>
        <dbReference type="ChEBI" id="CHEBI:456216"/>
        <dbReference type="EC" id="3.6.4.13"/>
    </reaction>
</comment>
<comment type="subunit">
    <text evidence="1 5">May form homooligomeric complexes. Interacts with IRF3 (By similarity). Interacts with OCT4 and POU5F1 (PubMed:32703285).</text>
</comment>
<comment type="subcellular location">
    <subcellularLocation>
        <location evidence="5">Nucleus</location>
        <location evidence="5">Nucleolus</location>
    </subcellularLocation>
</comment>
<comment type="similarity">
    <text evidence="6">Belongs to the DEAD box helicase family. DDX56/DBP9 subfamily.</text>
</comment>
<proteinExistence type="evidence at protein level"/>
<name>DDX56_MOUSE</name>
<accession>Q9D0R4</accession>
<keyword id="KW-0067">ATP-binding</keyword>
<keyword id="KW-0347">Helicase</keyword>
<keyword id="KW-0378">Hydrolase</keyword>
<keyword id="KW-0547">Nucleotide-binding</keyword>
<keyword id="KW-0539">Nucleus</keyword>
<keyword id="KW-0597">Phosphoprotein</keyword>
<keyword id="KW-1185">Reference proteome</keyword>
<keyword id="KW-0690">Ribosome biogenesis</keyword>
<keyword id="KW-0694">RNA-binding</keyword>
<keyword id="KW-0698">rRNA processing</keyword>
<dbReference type="EC" id="3.6.4.13"/>
<dbReference type="EMBL" id="AK011136">
    <property type="protein sequence ID" value="BAB27426.1"/>
    <property type="molecule type" value="mRNA"/>
</dbReference>
<dbReference type="EMBL" id="AK077514">
    <property type="protein sequence ID" value="BAC36839.1"/>
    <property type="molecule type" value="mRNA"/>
</dbReference>
<dbReference type="EMBL" id="BC018291">
    <property type="protein sequence ID" value="AAH18291.1"/>
    <property type="molecule type" value="mRNA"/>
</dbReference>
<dbReference type="CCDS" id="CCDS24414.1"/>
<dbReference type="RefSeq" id="NP_080814.1">
    <property type="nucleotide sequence ID" value="NM_026538.4"/>
</dbReference>
<dbReference type="SMR" id="Q9D0R4"/>
<dbReference type="BioGRID" id="206632">
    <property type="interactions" value="5"/>
</dbReference>
<dbReference type="CORUM" id="Q9D0R4"/>
<dbReference type="FunCoup" id="Q9D0R4">
    <property type="interactions" value="3535"/>
</dbReference>
<dbReference type="IntAct" id="Q9D0R4">
    <property type="interactions" value="1"/>
</dbReference>
<dbReference type="STRING" id="10090.ENSMUSP00000004507"/>
<dbReference type="iPTMnet" id="Q9D0R4"/>
<dbReference type="PhosphoSitePlus" id="Q9D0R4"/>
<dbReference type="PaxDb" id="10090-ENSMUSP00000004507"/>
<dbReference type="ProteomicsDB" id="279182"/>
<dbReference type="Pumba" id="Q9D0R4"/>
<dbReference type="Antibodypedia" id="13419">
    <property type="antibodies" value="365 antibodies from 27 providers"/>
</dbReference>
<dbReference type="DNASU" id="52513"/>
<dbReference type="Ensembl" id="ENSMUST00000004507.11">
    <property type="protein sequence ID" value="ENSMUSP00000004507.5"/>
    <property type="gene ID" value="ENSMUSG00000004393.11"/>
</dbReference>
<dbReference type="GeneID" id="52513"/>
<dbReference type="KEGG" id="mmu:52513"/>
<dbReference type="UCSC" id="uc007hyc.1">
    <property type="organism name" value="mouse"/>
</dbReference>
<dbReference type="AGR" id="MGI:1277172"/>
<dbReference type="CTD" id="54606"/>
<dbReference type="MGI" id="MGI:1277172">
    <property type="gene designation" value="Ddx56"/>
</dbReference>
<dbReference type="VEuPathDB" id="HostDB:ENSMUSG00000004393"/>
<dbReference type="eggNOG" id="KOG0346">
    <property type="taxonomic scope" value="Eukaryota"/>
</dbReference>
<dbReference type="GeneTree" id="ENSGT00550000074946"/>
<dbReference type="HOGENOM" id="CLU_003041_17_1_1"/>
<dbReference type="InParanoid" id="Q9D0R4"/>
<dbReference type="OMA" id="NASEQCV"/>
<dbReference type="OrthoDB" id="1191041at2759"/>
<dbReference type="PhylomeDB" id="Q9D0R4"/>
<dbReference type="TreeFam" id="TF300620"/>
<dbReference type="BioGRID-ORCS" id="52513">
    <property type="hits" value="24 hits in 81 CRISPR screens"/>
</dbReference>
<dbReference type="ChiTaRS" id="Ddx56">
    <property type="organism name" value="mouse"/>
</dbReference>
<dbReference type="PRO" id="PR:Q9D0R4"/>
<dbReference type="Proteomes" id="UP000000589">
    <property type="component" value="Chromosome 11"/>
</dbReference>
<dbReference type="RNAct" id="Q9D0R4">
    <property type="molecule type" value="protein"/>
</dbReference>
<dbReference type="Bgee" id="ENSMUSG00000004393">
    <property type="expression patterns" value="Expressed in otic placode and 253 other cell types or tissues"/>
</dbReference>
<dbReference type="ExpressionAtlas" id="Q9D0R4">
    <property type="expression patterns" value="baseline and differential"/>
</dbReference>
<dbReference type="GO" id="GO:0005829">
    <property type="term" value="C:cytosol"/>
    <property type="evidence" value="ECO:0007669"/>
    <property type="project" value="Ensembl"/>
</dbReference>
<dbReference type="GO" id="GO:0005730">
    <property type="term" value="C:nucleolus"/>
    <property type="evidence" value="ECO:0000314"/>
    <property type="project" value="MGI"/>
</dbReference>
<dbReference type="GO" id="GO:0005524">
    <property type="term" value="F:ATP binding"/>
    <property type="evidence" value="ECO:0007669"/>
    <property type="project" value="UniProtKB-KW"/>
</dbReference>
<dbReference type="GO" id="GO:0016887">
    <property type="term" value="F:ATP hydrolysis activity"/>
    <property type="evidence" value="ECO:0007669"/>
    <property type="project" value="RHEA"/>
</dbReference>
<dbReference type="GO" id="GO:0140311">
    <property type="term" value="F:protein sequestering activity"/>
    <property type="evidence" value="ECO:0007669"/>
    <property type="project" value="Ensembl"/>
</dbReference>
<dbReference type="GO" id="GO:0003724">
    <property type="term" value="F:RNA helicase activity"/>
    <property type="evidence" value="ECO:0007669"/>
    <property type="project" value="UniProtKB-EC"/>
</dbReference>
<dbReference type="GO" id="GO:0035613">
    <property type="term" value="F:RNA stem-loop binding"/>
    <property type="evidence" value="ECO:0007669"/>
    <property type="project" value="Ensembl"/>
</dbReference>
<dbReference type="GO" id="GO:0051607">
    <property type="term" value="P:defense response to virus"/>
    <property type="evidence" value="ECO:0007669"/>
    <property type="project" value="Ensembl"/>
</dbReference>
<dbReference type="GO" id="GO:0044830">
    <property type="term" value="P:modulation by host of viral RNA genome replication"/>
    <property type="evidence" value="ECO:0007669"/>
    <property type="project" value="Ensembl"/>
</dbReference>
<dbReference type="GO" id="GO:0032480">
    <property type="term" value="P:negative regulation of type I interferon production"/>
    <property type="evidence" value="ECO:0007669"/>
    <property type="project" value="Ensembl"/>
</dbReference>
<dbReference type="GO" id="GO:0010976">
    <property type="term" value="P:positive regulation of neuron projection development"/>
    <property type="evidence" value="ECO:0007669"/>
    <property type="project" value="Ensembl"/>
</dbReference>
<dbReference type="GO" id="GO:0006364">
    <property type="term" value="P:rRNA processing"/>
    <property type="evidence" value="ECO:0007669"/>
    <property type="project" value="UniProtKB-KW"/>
</dbReference>
<dbReference type="CDD" id="cd17961">
    <property type="entry name" value="DEADc_DDX56"/>
    <property type="match status" value="1"/>
</dbReference>
<dbReference type="CDD" id="cd18787">
    <property type="entry name" value="SF2_C_DEAD"/>
    <property type="match status" value="1"/>
</dbReference>
<dbReference type="FunFam" id="3.40.50.300:FF:000939">
    <property type="entry name" value="Probable ATP-dependent RNA helicase DDX56"/>
    <property type="match status" value="1"/>
</dbReference>
<dbReference type="FunFam" id="3.40.50.300:FF:001046">
    <property type="entry name" value="Probable ATP-dependent RNA helicase ddx56"/>
    <property type="match status" value="1"/>
</dbReference>
<dbReference type="Gene3D" id="3.40.50.300">
    <property type="entry name" value="P-loop containing nucleotide triphosphate hydrolases"/>
    <property type="match status" value="2"/>
</dbReference>
<dbReference type="InterPro" id="IPR011545">
    <property type="entry name" value="DEAD/DEAH_box_helicase_dom"/>
</dbReference>
<dbReference type="InterPro" id="IPR050079">
    <property type="entry name" value="DEAD_box_RNA_helicase"/>
</dbReference>
<dbReference type="InterPro" id="IPR014001">
    <property type="entry name" value="Helicase_ATP-bd"/>
</dbReference>
<dbReference type="InterPro" id="IPR001650">
    <property type="entry name" value="Helicase_C-like"/>
</dbReference>
<dbReference type="InterPro" id="IPR027417">
    <property type="entry name" value="P-loop_NTPase"/>
</dbReference>
<dbReference type="InterPro" id="IPR014014">
    <property type="entry name" value="RNA_helicase_DEAD_Q_motif"/>
</dbReference>
<dbReference type="PANTHER" id="PTHR47959">
    <property type="entry name" value="ATP-DEPENDENT RNA HELICASE RHLE-RELATED"/>
    <property type="match status" value="1"/>
</dbReference>
<dbReference type="PANTHER" id="PTHR47959:SF21">
    <property type="entry name" value="DEAD-BOX HELICASE 56"/>
    <property type="match status" value="1"/>
</dbReference>
<dbReference type="Pfam" id="PF00270">
    <property type="entry name" value="DEAD"/>
    <property type="match status" value="1"/>
</dbReference>
<dbReference type="Pfam" id="PF00271">
    <property type="entry name" value="Helicase_C"/>
    <property type="match status" value="1"/>
</dbReference>
<dbReference type="SMART" id="SM00487">
    <property type="entry name" value="DEXDc"/>
    <property type="match status" value="1"/>
</dbReference>
<dbReference type="SMART" id="SM00490">
    <property type="entry name" value="HELICc"/>
    <property type="match status" value="1"/>
</dbReference>
<dbReference type="SUPFAM" id="SSF52540">
    <property type="entry name" value="P-loop containing nucleoside triphosphate hydrolases"/>
    <property type="match status" value="2"/>
</dbReference>
<dbReference type="PROSITE" id="PS51192">
    <property type="entry name" value="HELICASE_ATP_BIND_1"/>
    <property type="match status" value="1"/>
</dbReference>
<dbReference type="PROSITE" id="PS51194">
    <property type="entry name" value="HELICASE_CTER"/>
    <property type="match status" value="1"/>
</dbReference>
<dbReference type="PROSITE" id="PS51195">
    <property type="entry name" value="Q_MOTIF"/>
    <property type="match status" value="1"/>
</dbReference>
<sequence length="546" mass="61212">MEDQEALGFEHMGLDPRLLQAVTDLGWSRPTLIQEKAIPLALEGKDLLARARTGSGKTAAYAIPMLQSLLHKKATGPVMEQAVRGLVLVPTKELARQAQAMIQQLAAYCARDVRVANVSAAEDSASQRAVLMEKPDVVVGTPSRVLSHLQQNTLKLRDSLELLVVDEADLLFSFGFEDELKSLLCHLPRIYQAFLMSATFNEDVQTLKELVLHNPVTLKLQESQLPGPDQLQQFQVVCETEEDKFLLLYALLKLSLIRGKALLFVNTLERGYRLRLFLEQFSIPSCVLNGELPLRSRCHIISQFNQGLYDCVIATDAEILGPQVKGKRRGRGSKGNKASDPESGVARGIDFHHVSAVLNFDLPPTAEAYVHRAGRTARANNPGIVLTFVLPAEQPFLGKIEDLLSGEGEAPILLPYQFQMEEIESFRYRCRDAMRSVTKQAIREARLKEIKEELLHSEKLKTYFEDNPRDLQLLRHDLPLHPAVVKPHLGHVPDYLVPAALRGLVHPRKKRRKVPFSRKAKKVKAQNPLRDFKHRGKKPKPAAKPS</sequence>
<protein>
    <recommendedName>
        <fullName>Probable ATP-dependent RNA helicase DDX56</fullName>
        <ecNumber>3.6.4.13</ecNumber>
    </recommendedName>
    <alternativeName>
        <fullName>ATP-dependent 61 kDa nucleolar RNA helicase</fullName>
    </alternativeName>
    <alternativeName>
        <fullName>DEAD box protein 56</fullName>
    </alternativeName>
</protein>
<evidence type="ECO:0000250" key="1">
    <source>
        <dbReference type="UniProtKB" id="Q9NY93"/>
    </source>
</evidence>
<evidence type="ECO:0000255" key="2">
    <source>
        <dbReference type="PROSITE-ProRule" id="PRU00541"/>
    </source>
</evidence>
<evidence type="ECO:0000255" key="3">
    <source>
        <dbReference type="PROSITE-ProRule" id="PRU00542"/>
    </source>
</evidence>
<evidence type="ECO:0000256" key="4">
    <source>
        <dbReference type="SAM" id="MobiDB-lite"/>
    </source>
</evidence>
<evidence type="ECO:0000269" key="5">
    <source>
    </source>
</evidence>
<evidence type="ECO:0000305" key="6"/>
<feature type="chain" id="PRO_0000055059" description="Probable ATP-dependent RNA helicase DDX56">
    <location>
        <begin position="1"/>
        <end position="546"/>
    </location>
</feature>
<feature type="domain" description="Helicase ATP-binding" evidence="2">
    <location>
        <begin position="38"/>
        <end position="218"/>
    </location>
</feature>
<feature type="domain" description="Helicase C-terminal" evidence="3">
    <location>
        <begin position="230"/>
        <end position="424"/>
    </location>
</feature>
<feature type="region of interest" description="Disordered" evidence="4">
    <location>
        <begin position="324"/>
        <end position="344"/>
    </location>
</feature>
<feature type="region of interest" description="Disordered" evidence="4">
    <location>
        <begin position="508"/>
        <end position="546"/>
    </location>
</feature>
<feature type="short sequence motif" description="Q motif">
    <location>
        <begin position="7"/>
        <end position="35"/>
    </location>
</feature>
<feature type="short sequence motif" description="DEAD box">
    <location>
        <begin position="166"/>
        <end position="169"/>
    </location>
</feature>
<feature type="compositionally biased region" description="Basic residues" evidence="4">
    <location>
        <begin position="325"/>
        <end position="334"/>
    </location>
</feature>
<feature type="compositionally biased region" description="Basic residues" evidence="4">
    <location>
        <begin position="508"/>
        <end position="524"/>
    </location>
</feature>
<feature type="compositionally biased region" description="Basic residues" evidence="4">
    <location>
        <begin position="532"/>
        <end position="546"/>
    </location>
</feature>
<feature type="binding site" evidence="2">
    <location>
        <begin position="51"/>
        <end position="58"/>
    </location>
    <ligand>
        <name>ATP</name>
        <dbReference type="ChEBI" id="CHEBI:30616"/>
    </ligand>
</feature>
<feature type="modified residue" description="Phosphoserine" evidence="1">
    <location>
        <position position="126"/>
    </location>
</feature>
<feature type="modified residue" description="Phosphothreonine" evidence="1">
    <location>
        <position position="141"/>
    </location>
</feature>
<organism>
    <name type="scientific">Mus musculus</name>
    <name type="common">Mouse</name>
    <dbReference type="NCBI Taxonomy" id="10090"/>
    <lineage>
        <taxon>Eukaryota</taxon>
        <taxon>Metazoa</taxon>
        <taxon>Chordata</taxon>
        <taxon>Craniata</taxon>
        <taxon>Vertebrata</taxon>
        <taxon>Euteleostomi</taxon>
        <taxon>Mammalia</taxon>
        <taxon>Eutheria</taxon>
        <taxon>Euarchontoglires</taxon>
        <taxon>Glires</taxon>
        <taxon>Rodentia</taxon>
        <taxon>Myomorpha</taxon>
        <taxon>Muroidea</taxon>
        <taxon>Muridae</taxon>
        <taxon>Murinae</taxon>
        <taxon>Mus</taxon>
        <taxon>Mus</taxon>
    </lineage>
</organism>
<gene>
    <name type="primary">Ddx56</name>
    <name type="synonym">D11Ertd619e</name>
    <name type="synonym">Noh61</name>
</gene>
<reference key="1">
    <citation type="journal article" date="2005" name="Science">
        <title>The transcriptional landscape of the mammalian genome.</title>
        <authorList>
            <person name="Carninci P."/>
            <person name="Kasukawa T."/>
            <person name="Katayama S."/>
            <person name="Gough J."/>
            <person name="Frith M.C."/>
            <person name="Maeda N."/>
            <person name="Oyama R."/>
            <person name="Ravasi T."/>
            <person name="Lenhard B."/>
            <person name="Wells C."/>
            <person name="Kodzius R."/>
            <person name="Shimokawa K."/>
            <person name="Bajic V.B."/>
            <person name="Brenner S.E."/>
            <person name="Batalov S."/>
            <person name="Forrest A.R."/>
            <person name="Zavolan M."/>
            <person name="Davis M.J."/>
            <person name="Wilming L.G."/>
            <person name="Aidinis V."/>
            <person name="Allen J.E."/>
            <person name="Ambesi-Impiombato A."/>
            <person name="Apweiler R."/>
            <person name="Aturaliya R.N."/>
            <person name="Bailey T.L."/>
            <person name="Bansal M."/>
            <person name="Baxter L."/>
            <person name="Beisel K.W."/>
            <person name="Bersano T."/>
            <person name="Bono H."/>
            <person name="Chalk A.M."/>
            <person name="Chiu K.P."/>
            <person name="Choudhary V."/>
            <person name="Christoffels A."/>
            <person name="Clutterbuck D.R."/>
            <person name="Crowe M.L."/>
            <person name="Dalla E."/>
            <person name="Dalrymple B.P."/>
            <person name="de Bono B."/>
            <person name="Della Gatta G."/>
            <person name="di Bernardo D."/>
            <person name="Down T."/>
            <person name="Engstrom P."/>
            <person name="Fagiolini M."/>
            <person name="Faulkner G."/>
            <person name="Fletcher C.F."/>
            <person name="Fukushima T."/>
            <person name="Furuno M."/>
            <person name="Futaki S."/>
            <person name="Gariboldi M."/>
            <person name="Georgii-Hemming P."/>
            <person name="Gingeras T.R."/>
            <person name="Gojobori T."/>
            <person name="Green R.E."/>
            <person name="Gustincich S."/>
            <person name="Harbers M."/>
            <person name="Hayashi Y."/>
            <person name="Hensch T.K."/>
            <person name="Hirokawa N."/>
            <person name="Hill D."/>
            <person name="Huminiecki L."/>
            <person name="Iacono M."/>
            <person name="Ikeo K."/>
            <person name="Iwama A."/>
            <person name="Ishikawa T."/>
            <person name="Jakt M."/>
            <person name="Kanapin A."/>
            <person name="Katoh M."/>
            <person name="Kawasawa Y."/>
            <person name="Kelso J."/>
            <person name="Kitamura H."/>
            <person name="Kitano H."/>
            <person name="Kollias G."/>
            <person name="Krishnan S.P."/>
            <person name="Kruger A."/>
            <person name="Kummerfeld S.K."/>
            <person name="Kurochkin I.V."/>
            <person name="Lareau L.F."/>
            <person name="Lazarevic D."/>
            <person name="Lipovich L."/>
            <person name="Liu J."/>
            <person name="Liuni S."/>
            <person name="McWilliam S."/>
            <person name="Madan Babu M."/>
            <person name="Madera M."/>
            <person name="Marchionni L."/>
            <person name="Matsuda H."/>
            <person name="Matsuzawa S."/>
            <person name="Miki H."/>
            <person name="Mignone F."/>
            <person name="Miyake S."/>
            <person name="Morris K."/>
            <person name="Mottagui-Tabar S."/>
            <person name="Mulder N."/>
            <person name="Nakano N."/>
            <person name="Nakauchi H."/>
            <person name="Ng P."/>
            <person name="Nilsson R."/>
            <person name="Nishiguchi S."/>
            <person name="Nishikawa S."/>
            <person name="Nori F."/>
            <person name="Ohara O."/>
            <person name="Okazaki Y."/>
            <person name="Orlando V."/>
            <person name="Pang K.C."/>
            <person name="Pavan W.J."/>
            <person name="Pavesi G."/>
            <person name="Pesole G."/>
            <person name="Petrovsky N."/>
            <person name="Piazza S."/>
            <person name="Reed J."/>
            <person name="Reid J.F."/>
            <person name="Ring B.Z."/>
            <person name="Ringwald M."/>
            <person name="Rost B."/>
            <person name="Ruan Y."/>
            <person name="Salzberg S.L."/>
            <person name="Sandelin A."/>
            <person name="Schneider C."/>
            <person name="Schoenbach C."/>
            <person name="Sekiguchi K."/>
            <person name="Semple C.A."/>
            <person name="Seno S."/>
            <person name="Sessa L."/>
            <person name="Sheng Y."/>
            <person name="Shibata Y."/>
            <person name="Shimada H."/>
            <person name="Shimada K."/>
            <person name="Silva D."/>
            <person name="Sinclair B."/>
            <person name="Sperling S."/>
            <person name="Stupka E."/>
            <person name="Sugiura K."/>
            <person name="Sultana R."/>
            <person name="Takenaka Y."/>
            <person name="Taki K."/>
            <person name="Tammoja K."/>
            <person name="Tan S.L."/>
            <person name="Tang S."/>
            <person name="Taylor M.S."/>
            <person name="Tegner J."/>
            <person name="Teichmann S.A."/>
            <person name="Ueda H.R."/>
            <person name="van Nimwegen E."/>
            <person name="Verardo R."/>
            <person name="Wei C.L."/>
            <person name="Yagi K."/>
            <person name="Yamanishi H."/>
            <person name="Zabarovsky E."/>
            <person name="Zhu S."/>
            <person name="Zimmer A."/>
            <person name="Hide W."/>
            <person name="Bult C."/>
            <person name="Grimmond S.M."/>
            <person name="Teasdale R.D."/>
            <person name="Liu E.T."/>
            <person name="Brusic V."/>
            <person name="Quackenbush J."/>
            <person name="Wahlestedt C."/>
            <person name="Mattick J.S."/>
            <person name="Hume D.A."/>
            <person name="Kai C."/>
            <person name="Sasaki D."/>
            <person name="Tomaru Y."/>
            <person name="Fukuda S."/>
            <person name="Kanamori-Katayama M."/>
            <person name="Suzuki M."/>
            <person name="Aoki J."/>
            <person name="Arakawa T."/>
            <person name="Iida J."/>
            <person name="Imamura K."/>
            <person name="Itoh M."/>
            <person name="Kato T."/>
            <person name="Kawaji H."/>
            <person name="Kawagashira N."/>
            <person name="Kawashima T."/>
            <person name="Kojima M."/>
            <person name="Kondo S."/>
            <person name="Konno H."/>
            <person name="Nakano K."/>
            <person name="Ninomiya N."/>
            <person name="Nishio T."/>
            <person name="Okada M."/>
            <person name="Plessy C."/>
            <person name="Shibata K."/>
            <person name="Shiraki T."/>
            <person name="Suzuki S."/>
            <person name="Tagami M."/>
            <person name="Waki K."/>
            <person name="Watahiki A."/>
            <person name="Okamura-Oho Y."/>
            <person name="Suzuki H."/>
            <person name="Kawai J."/>
            <person name="Hayashizaki Y."/>
        </authorList>
    </citation>
    <scope>NUCLEOTIDE SEQUENCE [LARGE SCALE MRNA]</scope>
    <source>
        <strain>C57BL/6J</strain>
        <tissue>Embryo</tissue>
    </source>
</reference>
<reference key="2">
    <citation type="journal article" date="2004" name="Genome Res.">
        <title>The status, quality, and expansion of the NIH full-length cDNA project: the Mammalian Gene Collection (MGC).</title>
        <authorList>
            <consortium name="The MGC Project Team"/>
        </authorList>
    </citation>
    <scope>NUCLEOTIDE SEQUENCE [LARGE SCALE MRNA]</scope>
    <source>
        <strain>FVB/N</strain>
        <tissue>Salivary gland</tissue>
    </source>
</reference>
<reference key="3">
    <citation type="journal article" date="2020" name="Stem Cell Res Ther">
        <title>Ddx56 maintains proliferation of mouse embryonic stem cells via ribosome assembly and interaction with the Oct4/Sox2 complex.</title>
        <authorList>
            <person name="Wang J."/>
            <person name="Liu J."/>
            <person name="Ye M."/>
            <person name="Liu F."/>
            <person name="Wu S."/>
            <person name="Huang J."/>
            <person name="Shi G."/>
        </authorList>
    </citation>
    <scope>FUNCTION</scope>
    <scope>INTERACTION WITH SOX2 AND POU5F1</scope>
    <scope>SUBCELLULAR LOCATION</scope>
</reference>